<organism>
    <name type="scientific">Austrelaps labialis</name>
    <name type="common">Pygmy copperhead</name>
    <name type="synonym">Denisonia superba</name>
    <dbReference type="NCBI Taxonomy" id="471292"/>
    <lineage>
        <taxon>Eukaryota</taxon>
        <taxon>Metazoa</taxon>
        <taxon>Chordata</taxon>
        <taxon>Craniata</taxon>
        <taxon>Vertebrata</taxon>
        <taxon>Euteleostomi</taxon>
        <taxon>Lepidosauria</taxon>
        <taxon>Squamata</taxon>
        <taxon>Bifurcata</taxon>
        <taxon>Unidentata</taxon>
        <taxon>Episquamata</taxon>
        <taxon>Toxicofera</taxon>
        <taxon>Serpentes</taxon>
        <taxon>Colubroidea</taxon>
        <taxon>Elapidae</taxon>
        <taxon>Hydrophiinae</taxon>
        <taxon>Austrelaps</taxon>
    </lineage>
</organism>
<proteinExistence type="inferred from homology"/>
<comment type="function">
    <text evidence="2">Binds with high affinity to muscular (alpha-1/CHRNA1) and neuronal (alpha-7/CHRNA7) nicotinic acetylcholine receptor (nAChR) and inhibits acetylcholine from binding to the receptor, thereby impairing neuromuscular and neuronal transmission.</text>
</comment>
<comment type="subcellular location">
    <subcellularLocation>
        <location evidence="1">Secreted</location>
    </subcellularLocation>
</comment>
<comment type="tissue specificity">
    <text evidence="3">Expressed by the venom gland.</text>
</comment>
<comment type="similarity">
    <text evidence="3">Belongs to the three-finger toxin family. Long-chain subfamily. Type II alpha-neurotoxin sub-subfamily.</text>
</comment>
<dbReference type="EMBL" id="EU003086">
    <property type="protein sequence ID" value="ABX58152.1"/>
    <property type="molecule type" value="mRNA"/>
</dbReference>
<dbReference type="SMR" id="B2BRQ6"/>
<dbReference type="GO" id="GO:0005576">
    <property type="term" value="C:extracellular region"/>
    <property type="evidence" value="ECO:0007669"/>
    <property type="project" value="UniProtKB-SubCell"/>
</dbReference>
<dbReference type="GO" id="GO:0030550">
    <property type="term" value="F:acetylcholine receptor inhibitor activity"/>
    <property type="evidence" value="ECO:0007669"/>
    <property type="project" value="UniProtKB-KW"/>
</dbReference>
<dbReference type="GO" id="GO:0099106">
    <property type="term" value="F:ion channel regulator activity"/>
    <property type="evidence" value="ECO:0007669"/>
    <property type="project" value="UniProtKB-KW"/>
</dbReference>
<dbReference type="GO" id="GO:0090729">
    <property type="term" value="F:toxin activity"/>
    <property type="evidence" value="ECO:0007669"/>
    <property type="project" value="UniProtKB-KW"/>
</dbReference>
<dbReference type="CDD" id="cd00206">
    <property type="entry name" value="TFP_snake_toxin"/>
    <property type="match status" value="1"/>
</dbReference>
<dbReference type="Gene3D" id="2.10.60.10">
    <property type="entry name" value="CD59"/>
    <property type="match status" value="1"/>
</dbReference>
<dbReference type="InterPro" id="IPR003571">
    <property type="entry name" value="Snake_3FTx"/>
</dbReference>
<dbReference type="InterPro" id="IPR045860">
    <property type="entry name" value="Snake_toxin-like_sf"/>
</dbReference>
<dbReference type="InterPro" id="IPR018354">
    <property type="entry name" value="Snake_toxin_con_site"/>
</dbReference>
<dbReference type="InterPro" id="IPR054131">
    <property type="entry name" value="Toxin_cobra-type"/>
</dbReference>
<dbReference type="Pfam" id="PF21947">
    <property type="entry name" value="Toxin_cobra-type"/>
    <property type="match status" value="1"/>
</dbReference>
<dbReference type="SUPFAM" id="SSF57302">
    <property type="entry name" value="Snake toxin-like"/>
    <property type="match status" value="1"/>
</dbReference>
<dbReference type="PROSITE" id="PS00272">
    <property type="entry name" value="SNAKE_TOXIN"/>
    <property type="match status" value="1"/>
</dbReference>
<feature type="signal peptide" evidence="1">
    <location>
        <begin position="1"/>
        <end position="21"/>
    </location>
</feature>
<feature type="chain" id="PRO_0000420998" description="Alpha-elapitoxin-Al2a">
    <location>
        <begin position="22"/>
        <end position="107"/>
    </location>
</feature>
<feature type="disulfide bond" evidence="1">
    <location>
        <begin position="24"/>
        <end position="41"/>
    </location>
</feature>
<feature type="disulfide bond" evidence="1">
    <location>
        <begin position="34"/>
        <end position="62"/>
    </location>
</feature>
<feature type="disulfide bond" evidence="1">
    <location>
        <begin position="47"/>
        <end position="51"/>
    </location>
</feature>
<feature type="disulfide bond" evidence="1">
    <location>
        <begin position="66"/>
        <end position="77"/>
    </location>
</feature>
<feature type="disulfide bond" evidence="1">
    <location>
        <begin position="78"/>
        <end position="83"/>
    </location>
</feature>
<sequence>MKTLLLTLVVVTIVCLDLGDSLRCYMGPKTPRTCPPGENLCFTKTWCDPRCSLLGKLVKLGCAATCPIPKSYEDVTCCSTDNCNRFPKWERSRPRPRGLLSSIMDHP</sequence>
<reference key="1">
    <citation type="journal article" date="2008" name="BMC Evol. Biol.">
        <title>Unusual accelerated rate of deletions and insertions in toxin genes in the venom glands of the pygmy copperhead (Austrelaps labialis) from Kangaroo island.</title>
        <authorList>
            <person name="Doley R."/>
            <person name="Tram N.N.B."/>
            <person name="Reza M.A."/>
            <person name="Kini R.M."/>
        </authorList>
    </citation>
    <scope>NUCLEOTIDE SEQUENCE [MRNA]</scope>
</reference>
<keyword id="KW-0008">Acetylcholine receptor inhibiting toxin</keyword>
<keyword id="KW-1015">Disulfide bond</keyword>
<keyword id="KW-0872">Ion channel impairing toxin</keyword>
<keyword id="KW-0528">Neurotoxin</keyword>
<keyword id="KW-0629">Postsynaptic neurotoxin</keyword>
<keyword id="KW-0964">Secreted</keyword>
<keyword id="KW-0732">Signal</keyword>
<keyword id="KW-0800">Toxin</keyword>
<accession>B2BRQ6</accession>
<name>3L22A_AUSLA</name>
<evidence type="ECO:0000250" key="1"/>
<evidence type="ECO:0000250" key="2">
    <source>
        <dbReference type="UniProtKB" id="P60615"/>
    </source>
</evidence>
<evidence type="ECO:0000305" key="3"/>
<protein>
    <recommendedName>
        <fullName>Alpha-elapitoxin-Al2a</fullName>
        <shortName>Alpha-EPTX-Al2a</shortName>
    </recommendedName>
    <alternativeName>
        <fullName>Putative long neurotoxin</fullName>
    </alternativeName>
</protein>